<proteinExistence type="evidence at protein level"/>
<evidence type="ECO:0000255" key="1"/>
<evidence type="ECO:0000256" key="2">
    <source>
        <dbReference type="SAM" id="MobiDB-lite"/>
    </source>
</evidence>
<evidence type="ECO:0000305" key="3"/>
<protein>
    <recommendedName>
        <fullName>Uncharacterized protein Rv1290c</fullName>
    </recommendedName>
</protein>
<reference key="1">
    <citation type="journal article" date="1998" name="Nature">
        <title>Deciphering the biology of Mycobacterium tuberculosis from the complete genome sequence.</title>
        <authorList>
            <person name="Cole S.T."/>
            <person name="Brosch R."/>
            <person name="Parkhill J."/>
            <person name="Garnier T."/>
            <person name="Churcher C.M."/>
            <person name="Harris D.E."/>
            <person name="Gordon S.V."/>
            <person name="Eiglmeier K."/>
            <person name="Gas S."/>
            <person name="Barry C.E. III"/>
            <person name="Tekaia F."/>
            <person name="Badcock K."/>
            <person name="Basham D."/>
            <person name="Brown D."/>
            <person name="Chillingworth T."/>
            <person name="Connor R."/>
            <person name="Davies R.M."/>
            <person name="Devlin K."/>
            <person name="Feltwell T."/>
            <person name="Gentles S."/>
            <person name="Hamlin N."/>
            <person name="Holroyd S."/>
            <person name="Hornsby T."/>
            <person name="Jagels K."/>
            <person name="Krogh A."/>
            <person name="McLean J."/>
            <person name="Moule S."/>
            <person name="Murphy L.D."/>
            <person name="Oliver S."/>
            <person name="Osborne J."/>
            <person name="Quail M.A."/>
            <person name="Rajandream M.A."/>
            <person name="Rogers J."/>
            <person name="Rutter S."/>
            <person name="Seeger K."/>
            <person name="Skelton S."/>
            <person name="Squares S."/>
            <person name="Squares R."/>
            <person name="Sulston J.E."/>
            <person name="Taylor K."/>
            <person name="Whitehead S."/>
            <person name="Barrell B.G."/>
        </authorList>
    </citation>
    <scope>NUCLEOTIDE SEQUENCE [LARGE SCALE GENOMIC DNA]</scope>
    <source>
        <strain>ATCC 25618 / H37Rv</strain>
    </source>
</reference>
<reference key="2">
    <citation type="journal article" date="2011" name="Mol. Cell. Proteomics">
        <title>Proteogenomic analysis of Mycobacterium tuberculosis by high resolution mass spectrometry.</title>
        <authorList>
            <person name="Kelkar D.S."/>
            <person name="Kumar D."/>
            <person name="Kumar P."/>
            <person name="Balakrishnan L."/>
            <person name="Muthusamy B."/>
            <person name="Yadav A.K."/>
            <person name="Shrivastava P."/>
            <person name="Marimuthu A."/>
            <person name="Anand S."/>
            <person name="Sundaram H."/>
            <person name="Kingsbury R."/>
            <person name="Harsha H.C."/>
            <person name="Nair B."/>
            <person name="Prasad T.S."/>
            <person name="Chauhan D.S."/>
            <person name="Katoch K."/>
            <person name="Katoch V.M."/>
            <person name="Kumar P."/>
            <person name="Chaerkady R."/>
            <person name="Ramachandran S."/>
            <person name="Dash D."/>
            <person name="Pandey A."/>
        </authorList>
    </citation>
    <scope>IDENTIFICATION BY MASS SPECTROMETRY [LARGE SCALE ANALYSIS]</scope>
    <source>
        <strain>ATCC 25618 / H37Rv</strain>
    </source>
</reference>
<feature type="chain" id="PRO_0000103789" description="Uncharacterized protein Rv1290c">
    <location>
        <begin position="1"/>
        <end position="521"/>
    </location>
</feature>
<feature type="transmembrane region" description="Helical" evidence="1">
    <location>
        <begin position="68"/>
        <end position="88"/>
    </location>
</feature>
<feature type="transmembrane region" description="Helical" evidence="1">
    <location>
        <begin position="114"/>
        <end position="134"/>
    </location>
</feature>
<feature type="transmembrane region" description="Helical" evidence="1">
    <location>
        <begin position="160"/>
        <end position="180"/>
    </location>
</feature>
<feature type="transmembrane region" description="Helical" evidence="1">
    <location>
        <begin position="192"/>
        <end position="212"/>
    </location>
</feature>
<feature type="transmembrane region" description="Helical" evidence="1">
    <location>
        <begin position="290"/>
        <end position="310"/>
    </location>
</feature>
<feature type="transmembrane region" description="Helical" evidence="1">
    <location>
        <begin position="399"/>
        <end position="419"/>
    </location>
</feature>
<feature type="region of interest" description="Disordered" evidence="2">
    <location>
        <begin position="1"/>
        <end position="25"/>
    </location>
</feature>
<organism>
    <name type="scientific">Mycobacterium tuberculosis (strain ATCC 25618 / H37Rv)</name>
    <dbReference type="NCBI Taxonomy" id="83332"/>
    <lineage>
        <taxon>Bacteria</taxon>
        <taxon>Bacillati</taxon>
        <taxon>Actinomycetota</taxon>
        <taxon>Actinomycetes</taxon>
        <taxon>Mycobacteriales</taxon>
        <taxon>Mycobacteriaceae</taxon>
        <taxon>Mycobacterium</taxon>
        <taxon>Mycobacterium tuberculosis complex</taxon>
    </lineage>
</organism>
<gene>
    <name type="ordered locus">Rv1290c</name>
    <name type="ORF">MTCY373.09c</name>
</gene>
<comment type="subcellular location">
    <subcellularLocation>
        <location evidence="3">Cell membrane</location>
        <topology evidence="3">Multi-pass membrane protein</topology>
    </subcellularLocation>
</comment>
<dbReference type="EMBL" id="AL123456">
    <property type="protein sequence ID" value="CCP44046.1"/>
    <property type="molecule type" value="Genomic_DNA"/>
</dbReference>
<dbReference type="PIR" id="F70772">
    <property type="entry name" value="F70772"/>
</dbReference>
<dbReference type="RefSeq" id="NP_215806.1">
    <property type="nucleotide sequence ID" value="NC_000962.3"/>
</dbReference>
<dbReference type="RefSeq" id="WP_003406627.1">
    <property type="nucleotide sequence ID" value="NZ_NVQJ01000030.1"/>
</dbReference>
<dbReference type="PaxDb" id="83332-Rv1290c"/>
<dbReference type="DNASU" id="886971"/>
<dbReference type="GeneID" id="886971"/>
<dbReference type="KEGG" id="mtu:Rv1290c"/>
<dbReference type="KEGG" id="mtv:RVBD_1290c"/>
<dbReference type="TubercuList" id="Rv1290c"/>
<dbReference type="eggNOG" id="COG4325">
    <property type="taxonomic scope" value="Bacteria"/>
</dbReference>
<dbReference type="InParanoid" id="P9WM35"/>
<dbReference type="OrthoDB" id="2955631at2"/>
<dbReference type="PhylomeDB" id="P9WM35"/>
<dbReference type="PHI-base" id="PHI:3643"/>
<dbReference type="Proteomes" id="UP000001584">
    <property type="component" value="Chromosome"/>
</dbReference>
<dbReference type="GO" id="GO:0005829">
    <property type="term" value="C:cytosol"/>
    <property type="evidence" value="ECO:0007005"/>
    <property type="project" value="MTBBASE"/>
</dbReference>
<dbReference type="GO" id="GO:0005886">
    <property type="term" value="C:plasma membrane"/>
    <property type="evidence" value="ECO:0007669"/>
    <property type="project" value="UniProtKB-SubCell"/>
</dbReference>
<dbReference type="InterPro" id="IPR018723">
    <property type="entry name" value="DUF2254_membrane"/>
</dbReference>
<dbReference type="Pfam" id="PF10011">
    <property type="entry name" value="DUF2254"/>
    <property type="match status" value="1"/>
</dbReference>
<keyword id="KW-1003">Cell membrane</keyword>
<keyword id="KW-0472">Membrane</keyword>
<keyword id="KW-1185">Reference proteome</keyword>
<keyword id="KW-0812">Transmembrane</keyword>
<keyword id="KW-1133">Transmembrane helix</keyword>
<accession>P9WM35</accession>
<accession>L0T676</accession>
<accession>P0A5E3</accession>
<accession>Q10616</accession>
<sequence length="521" mass="56028">MLQRSLGVNGRKLAMSARSAKRERKNASTAASKCYVVPPSARGWVHAYSVTATSMLNRRKAILDYLQGAVWVLPTFGVAIGLGSGAVLSMIPVKSGTLIDKLMFQGTPGDARGVLIVVSATMITTIGIVFSLTVLSLQIASSQFSVRLLRTFLRDVPNQVVLAIFACTFAYSTGGLHTVGEHRDGGAFIPKVAVTGSLALAFVSIAALIYFLHHLMHSIQIDTIMDKVRLRTLGLVDQLYPESDTADRQVETPPSPPADAVPLLAPHSGYLQTVDVDDIAELAAASRYTALLVTFVGDYVTAGGLLGWCWRRGTAPGAPGSDFPQRCLRHVHIGFERTLQQDIRFGLRQMVDIALRALSPALNDPYTAIQVVHHLSAVESVLASRALPDDVRRDRAGELLFWLPYPSFATYLHVGCAQIRRYGSREPLVLTALLQLLSAVAQNCVDPSRRVAVQTQIALVVRAAQREFADESDRAMVLGAAARATEVVERPGTLAPPPSTFGQVAAAQAAASTIRSADRDG</sequence>
<name>Y1290_MYCTU</name>